<evidence type="ECO:0000255" key="1">
    <source>
        <dbReference type="HAMAP-Rule" id="MF_01569"/>
    </source>
</evidence>
<gene>
    <name evidence="1" type="primary">proS</name>
    <name type="ordered locus">MW1146</name>
</gene>
<organism>
    <name type="scientific">Staphylococcus aureus (strain MW2)</name>
    <dbReference type="NCBI Taxonomy" id="196620"/>
    <lineage>
        <taxon>Bacteria</taxon>
        <taxon>Bacillati</taxon>
        <taxon>Bacillota</taxon>
        <taxon>Bacilli</taxon>
        <taxon>Bacillales</taxon>
        <taxon>Staphylococcaceae</taxon>
        <taxon>Staphylococcus</taxon>
    </lineage>
</organism>
<proteinExistence type="inferred from homology"/>
<protein>
    <recommendedName>
        <fullName evidence="1">Proline--tRNA ligase</fullName>
        <ecNumber evidence="1">6.1.1.15</ecNumber>
    </recommendedName>
    <alternativeName>
        <fullName evidence="1">Prolyl-tRNA synthetase</fullName>
        <shortName evidence="1">ProRS</shortName>
    </alternativeName>
</protein>
<keyword id="KW-0030">Aminoacyl-tRNA synthetase</keyword>
<keyword id="KW-0067">ATP-binding</keyword>
<keyword id="KW-0963">Cytoplasm</keyword>
<keyword id="KW-0436">Ligase</keyword>
<keyword id="KW-0547">Nucleotide-binding</keyword>
<keyword id="KW-0648">Protein biosynthesis</keyword>
<sequence length="567" mass="63859">MKQSKVFIPTMRDVPSEAEAQSHRLLLKSGLIKQSTSGIYSYLPLATRVLNNITAIVRQEMERIDSVEILMPALQQAELWEESGRWGAYGPELMRLQDRHGRQFALGPTHEELVTSIVRNELKSYKQLPMTLFQIQSKFRDEKRPRFGLLRGREFIMKDAYSFHADEASLDQTYQDMYQAYSRIFERVGINARPVVADSGAIGGSHTHEFMALSAIGEDTIVYSKESDYAANIEKAEVVYEPNHKHSTVQPLEKIETPNVKTAQELADFLGRPVDEIVKTMIFKVDGEYIMVLVRGHHEINDIKLKSYFGTDNIELATQDEIVNLVGANPGSLGPVIDKEIKIYADNFVQDLNNLVVGANEDGYHLINVNVGRDFNVDEYGDFRFILEGEKLSDGSGVAHFAEGIEVGQVFKLGTKYSESMNATFLDNQGKAQPLIMGCYGIGISRTLSAIVEQNHDDNGIVWPKSVTPFDLHLISINPKKDDQRELADALYAEFNTKFDVLYDDRQERAGVKFNDADLIGLPLRIVVGKRASEGIVEVKERLTGDSEEVHIDDLMTVITNKYDNLK</sequence>
<comment type="function">
    <text evidence="1">Catalyzes the attachment of proline to tRNA(Pro) in a two-step reaction: proline is first activated by ATP to form Pro-AMP and then transferred to the acceptor end of tRNA(Pro). As ProRS can inadvertently accommodate and process non-cognate amino acids such as alanine and cysteine, to avoid such errors it has two additional distinct editing activities against alanine. One activity is designated as 'pretransfer' editing and involves the tRNA(Pro)-independent hydrolysis of activated Ala-AMP. The other activity is designated 'posttransfer' editing and involves deacylation of mischarged Ala-tRNA(Pro). The misacylated Cys-tRNA(Pro) is not edited by ProRS.</text>
</comment>
<comment type="catalytic activity">
    <reaction evidence="1">
        <text>tRNA(Pro) + L-proline + ATP = L-prolyl-tRNA(Pro) + AMP + diphosphate</text>
        <dbReference type="Rhea" id="RHEA:14305"/>
        <dbReference type="Rhea" id="RHEA-COMP:9700"/>
        <dbReference type="Rhea" id="RHEA-COMP:9702"/>
        <dbReference type="ChEBI" id="CHEBI:30616"/>
        <dbReference type="ChEBI" id="CHEBI:33019"/>
        <dbReference type="ChEBI" id="CHEBI:60039"/>
        <dbReference type="ChEBI" id="CHEBI:78442"/>
        <dbReference type="ChEBI" id="CHEBI:78532"/>
        <dbReference type="ChEBI" id="CHEBI:456215"/>
        <dbReference type="EC" id="6.1.1.15"/>
    </reaction>
</comment>
<comment type="subunit">
    <text evidence="1">Homodimer.</text>
</comment>
<comment type="subcellular location">
    <subcellularLocation>
        <location evidence="1">Cytoplasm</location>
    </subcellularLocation>
</comment>
<comment type="domain">
    <text evidence="1">Consists of three domains: the N-terminal catalytic domain, the editing domain and the C-terminal anticodon-binding domain.</text>
</comment>
<comment type="similarity">
    <text evidence="1">Belongs to the class-II aminoacyl-tRNA synthetase family. ProS type 1 subfamily.</text>
</comment>
<accession>Q7A120</accession>
<dbReference type="EC" id="6.1.1.15" evidence="1"/>
<dbReference type="EMBL" id="BA000033">
    <property type="protein sequence ID" value="BAB95011.1"/>
    <property type="molecule type" value="Genomic_DNA"/>
</dbReference>
<dbReference type="RefSeq" id="WP_000814094.1">
    <property type="nucleotide sequence ID" value="NC_003923.1"/>
</dbReference>
<dbReference type="SMR" id="Q7A120"/>
<dbReference type="KEGG" id="sam:MW1146"/>
<dbReference type="HOGENOM" id="CLU_016739_0_0_9"/>
<dbReference type="GO" id="GO:0005829">
    <property type="term" value="C:cytosol"/>
    <property type="evidence" value="ECO:0007669"/>
    <property type="project" value="TreeGrafter"/>
</dbReference>
<dbReference type="GO" id="GO:0002161">
    <property type="term" value="F:aminoacyl-tRNA deacylase activity"/>
    <property type="evidence" value="ECO:0007669"/>
    <property type="project" value="InterPro"/>
</dbReference>
<dbReference type="GO" id="GO:0005524">
    <property type="term" value="F:ATP binding"/>
    <property type="evidence" value="ECO:0007669"/>
    <property type="project" value="UniProtKB-UniRule"/>
</dbReference>
<dbReference type="GO" id="GO:0140096">
    <property type="term" value="F:catalytic activity, acting on a protein"/>
    <property type="evidence" value="ECO:0007669"/>
    <property type="project" value="UniProtKB-ARBA"/>
</dbReference>
<dbReference type="GO" id="GO:0004827">
    <property type="term" value="F:proline-tRNA ligase activity"/>
    <property type="evidence" value="ECO:0007669"/>
    <property type="project" value="UniProtKB-UniRule"/>
</dbReference>
<dbReference type="GO" id="GO:0016740">
    <property type="term" value="F:transferase activity"/>
    <property type="evidence" value="ECO:0007669"/>
    <property type="project" value="UniProtKB-ARBA"/>
</dbReference>
<dbReference type="GO" id="GO:0006433">
    <property type="term" value="P:prolyl-tRNA aminoacylation"/>
    <property type="evidence" value="ECO:0007669"/>
    <property type="project" value="UniProtKB-UniRule"/>
</dbReference>
<dbReference type="CDD" id="cd04334">
    <property type="entry name" value="ProRS-INS"/>
    <property type="match status" value="1"/>
</dbReference>
<dbReference type="CDD" id="cd00861">
    <property type="entry name" value="ProRS_anticodon_short"/>
    <property type="match status" value="1"/>
</dbReference>
<dbReference type="CDD" id="cd00779">
    <property type="entry name" value="ProRS_core_prok"/>
    <property type="match status" value="1"/>
</dbReference>
<dbReference type="FunFam" id="3.30.930.10:FF:000043">
    <property type="entry name" value="Proline--tRNA ligase"/>
    <property type="match status" value="1"/>
</dbReference>
<dbReference type="FunFam" id="3.40.50.800:FF:000011">
    <property type="entry name" value="Proline--tRNA ligase"/>
    <property type="match status" value="1"/>
</dbReference>
<dbReference type="Gene3D" id="3.40.50.800">
    <property type="entry name" value="Anticodon-binding domain"/>
    <property type="match status" value="1"/>
</dbReference>
<dbReference type="Gene3D" id="3.30.930.10">
    <property type="entry name" value="Bira Bifunctional Protein, Domain 2"/>
    <property type="match status" value="2"/>
</dbReference>
<dbReference type="Gene3D" id="3.90.960.10">
    <property type="entry name" value="YbaK/aminoacyl-tRNA synthetase-associated domain"/>
    <property type="match status" value="1"/>
</dbReference>
<dbReference type="HAMAP" id="MF_01569">
    <property type="entry name" value="Pro_tRNA_synth_type1"/>
    <property type="match status" value="1"/>
</dbReference>
<dbReference type="InterPro" id="IPR002314">
    <property type="entry name" value="aa-tRNA-synt_IIb"/>
</dbReference>
<dbReference type="InterPro" id="IPR006195">
    <property type="entry name" value="aa-tRNA-synth_II"/>
</dbReference>
<dbReference type="InterPro" id="IPR045864">
    <property type="entry name" value="aa-tRNA-synth_II/BPL/LPL"/>
</dbReference>
<dbReference type="InterPro" id="IPR004154">
    <property type="entry name" value="Anticodon-bd"/>
</dbReference>
<dbReference type="InterPro" id="IPR036621">
    <property type="entry name" value="Anticodon-bd_dom_sf"/>
</dbReference>
<dbReference type="InterPro" id="IPR002316">
    <property type="entry name" value="Pro-tRNA-ligase_IIa"/>
</dbReference>
<dbReference type="InterPro" id="IPR004500">
    <property type="entry name" value="Pro-tRNA-synth_IIa_bac-type"/>
</dbReference>
<dbReference type="InterPro" id="IPR023717">
    <property type="entry name" value="Pro-tRNA-Synthase_IIa_type1"/>
</dbReference>
<dbReference type="InterPro" id="IPR050062">
    <property type="entry name" value="Pro-tRNA_synthetase"/>
</dbReference>
<dbReference type="InterPro" id="IPR044140">
    <property type="entry name" value="ProRS_anticodon_short"/>
</dbReference>
<dbReference type="InterPro" id="IPR033730">
    <property type="entry name" value="ProRS_core_prok"/>
</dbReference>
<dbReference type="InterPro" id="IPR036754">
    <property type="entry name" value="YbaK/aa-tRNA-synt-asso_dom_sf"/>
</dbReference>
<dbReference type="InterPro" id="IPR007214">
    <property type="entry name" value="YbaK/aa-tRNA-synth-assoc-dom"/>
</dbReference>
<dbReference type="NCBIfam" id="NF006625">
    <property type="entry name" value="PRK09194.1"/>
    <property type="match status" value="1"/>
</dbReference>
<dbReference type="NCBIfam" id="TIGR00409">
    <property type="entry name" value="proS_fam_II"/>
    <property type="match status" value="1"/>
</dbReference>
<dbReference type="PANTHER" id="PTHR42753">
    <property type="entry name" value="MITOCHONDRIAL RIBOSOME PROTEIN L39/PROLYL-TRNA LIGASE FAMILY MEMBER"/>
    <property type="match status" value="1"/>
</dbReference>
<dbReference type="PANTHER" id="PTHR42753:SF2">
    <property type="entry name" value="PROLINE--TRNA LIGASE"/>
    <property type="match status" value="1"/>
</dbReference>
<dbReference type="Pfam" id="PF03129">
    <property type="entry name" value="HGTP_anticodon"/>
    <property type="match status" value="1"/>
</dbReference>
<dbReference type="Pfam" id="PF00587">
    <property type="entry name" value="tRNA-synt_2b"/>
    <property type="match status" value="1"/>
</dbReference>
<dbReference type="Pfam" id="PF04073">
    <property type="entry name" value="tRNA_edit"/>
    <property type="match status" value="1"/>
</dbReference>
<dbReference type="PRINTS" id="PR01046">
    <property type="entry name" value="TRNASYNTHPRO"/>
</dbReference>
<dbReference type="SUPFAM" id="SSF52954">
    <property type="entry name" value="Class II aaRS ABD-related"/>
    <property type="match status" value="1"/>
</dbReference>
<dbReference type="SUPFAM" id="SSF55681">
    <property type="entry name" value="Class II aaRS and biotin synthetases"/>
    <property type="match status" value="1"/>
</dbReference>
<dbReference type="SUPFAM" id="SSF55826">
    <property type="entry name" value="YbaK/ProRS associated domain"/>
    <property type="match status" value="1"/>
</dbReference>
<dbReference type="PROSITE" id="PS50862">
    <property type="entry name" value="AA_TRNA_LIGASE_II"/>
    <property type="match status" value="1"/>
</dbReference>
<reference key="1">
    <citation type="journal article" date="2002" name="Lancet">
        <title>Genome and virulence determinants of high virulence community-acquired MRSA.</title>
        <authorList>
            <person name="Baba T."/>
            <person name="Takeuchi F."/>
            <person name="Kuroda M."/>
            <person name="Yuzawa H."/>
            <person name="Aoki K."/>
            <person name="Oguchi A."/>
            <person name="Nagai Y."/>
            <person name="Iwama N."/>
            <person name="Asano K."/>
            <person name="Naimi T."/>
            <person name="Kuroda H."/>
            <person name="Cui L."/>
            <person name="Yamamoto K."/>
            <person name="Hiramatsu K."/>
        </authorList>
    </citation>
    <scope>NUCLEOTIDE SEQUENCE [LARGE SCALE GENOMIC DNA]</scope>
    <source>
        <strain>MW2</strain>
    </source>
</reference>
<feature type="chain" id="PRO_0000139343" description="Proline--tRNA ligase">
    <location>
        <begin position="1"/>
        <end position="567"/>
    </location>
</feature>
<name>SYP_STAAW</name>